<keyword id="KW-0472">Membrane</keyword>
<keyword id="KW-0812">Transmembrane</keyword>
<keyword id="KW-1133">Transmembrane helix</keyword>
<gene>
    <name type="ordered locus">YNL179C</name>
    <name type="ORF">N1648</name>
</gene>
<dbReference type="EMBL" id="Z71455">
    <property type="protein sequence ID" value="CAA96071.1"/>
    <property type="molecule type" value="Genomic_DNA"/>
</dbReference>
<dbReference type="PIR" id="S63134">
    <property type="entry name" value="S63134"/>
</dbReference>
<dbReference type="SMR" id="P53880"/>
<dbReference type="IntAct" id="P53880">
    <property type="interactions" value="1"/>
</dbReference>
<dbReference type="STRING" id="4932.YNL179C"/>
<dbReference type="PaxDb" id="4932-YNL179C"/>
<dbReference type="EnsemblFungi" id="YNL179C_mRNA">
    <property type="protein sequence ID" value="YNL179C"/>
    <property type="gene ID" value="YNL179C"/>
</dbReference>
<dbReference type="AGR" id="SGD:S000005123"/>
<dbReference type="SGD" id="S000005123">
    <property type="gene designation" value="YNL179C"/>
</dbReference>
<dbReference type="HOGENOM" id="CLU_1788344_0_0_1"/>
<dbReference type="GO" id="GO:0016020">
    <property type="term" value="C:membrane"/>
    <property type="evidence" value="ECO:0007669"/>
    <property type="project" value="UniProtKB-SubCell"/>
</dbReference>
<name>YNR9_YEAST</name>
<sequence length="145" mass="17611">MSNCRRLLCRQLSSAYLNYLPFYFLIYRPFSLYLSSCEYWQSCFSFFFLFFLFFFFFFTFQFLVAFPILLFKVSLNSTLTKHVRPIHQRTKARSLTHHCIPKRWNIHFFFSGLLHKTISRIFSWIGNTRQVAPTKHTPKYLLNTI</sequence>
<feature type="chain" id="PRO_0000203406" description="Putative uncharacterized protein YNL179C">
    <location>
        <begin position="1"/>
        <end position="145"/>
    </location>
</feature>
<feature type="transmembrane region" description="Helical" evidence="1">
    <location>
        <begin position="46"/>
        <end position="66"/>
    </location>
</feature>
<protein>
    <recommendedName>
        <fullName>Putative uncharacterized protein YNL179C</fullName>
    </recommendedName>
</protein>
<reference key="1">
    <citation type="journal article" date="1997" name="Nature">
        <title>The nucleotide sequence of Saccharomyces cerevisiae chromosome XIV and its evolutionary implications.</title>
        <authorList>
            <person name="Philippsen P."/>
            <person name="Kleine K."/>
            <person name="Poehlmann R."/>
            <person name="Duesterhoeft A."/>
            <person name="Hamberg K."/>
            <person name="Hegemann J.H."/>
            <person name="Obermaier B."/>
            <person name="Urrestarazu L.A."/>
            <person name="Aert R."/>
            <person name="Albermann K."/>
            <person name="Altmann R."/>
            <person name="Andre B."/>
            <person name="Baladron V."/>
            <person name="Ballesta J.P.G."/>
            <person name="Becam A.-M."/>
            <person name="Beinhauer J.D."/>
            <person name="Boskovic J."/>
            <person name="Buitrago M.J."/>
            <person name="Bussereau F."/>
            <person name="Coster F."/>
            <person name="Crouzet M."/>
            <person name="D'Angelo M."/>
            <person name="Dal Pero F."/>
            <person name="De Antoni A."/>
            <person name="del Rey F."/>
            <person name="Doignon F."/>
            <person name="Domdey H."/>
            <person name="Dubois E."/>
            <person name="Fiedler T.A."/>
            <person name="Fleig U."/>
            <person name="Floeth M."/>
            <person name="Fritz C."/>
            <person name="Gaillardin C."/>
            <person name="Garcia-Cantalejo J.M."/>
            <person name="Glansdorff N."/>
            <person name="Goffeau A."/>
            <person name="Gueldener U."/>
            <person name="Herbert C.J."/>
            <person name="Heumann K."/>
            <person name="Heuss-Neitzel D."/>
            <person name="Hilbert H."/>
            <person name="Hinni K."/>
            <person name="Iraqui Houssaini I."/>
            <person name="Jacquet M."/>
            <person name="Jimenez A."/>
            <person name="Jonniaux J.-L."/>
            <person name="Karpfinger-Hartl L."/>
            <person name="Lanfranchi G."/>
            <person name="Lepingle A."/>
            <person name="Levesque H."/>
            <person name="Lyck R."/>
            <person name="Maftahi M."/>
            <person name="Mallet L."/>
            <person name="Maurer C.T.C."/>
            <person name="Messenguy F."/>
            <person name="Mewes H.-W."/>
            <person name="Moestl D."/>
            <person name="Nasr F."/>
            <person name="Nicaud J.-M."/>
            <person name="Niedenthal R.K."/>
            <person name="Pandolfo D."/>
            <person name="Pierard A."/>
            <person name="Piravandi E."/>
            <person name="Planta R.J."/>
            <person name="Pohl T.M."/>
            <person name="Purnelle B."/>
            <person name="Rebischung C."/>
            <person name="Remacha M.A."/>
            <person name="Revuelta J.L."/>
            <person name="Rinke M."/>
            <person name="Saiz J.E."/>
            <person name="Sartorello F."/>
            <person name="Scherens B."/>
            <person name="Sen-Gupta M."/>
            <person name="Soler-Mira A."/>
            <person name="Urbanus J.H.M."/>
            <person name="Valle G."/>
            <person name="Van Dyck L."/>
            <person name="Verhasselt P."/>
            <person name="Vierendeels F."/>
            <person name="Vissers S."/>
            <person name="Voet M."/>
            <person name="Volckaert G."/>
            <person name="Wach A."/>
            <person name="Wambutt R."/>
            <person name="Wedler H."/>
            <person name="Zollner A."/>
            <person name="Hani J."/>
        </authorList>
    </citation>
    <scope>NUCLEOTIDE SEQUENCE [LARGE SCALE GENOMIC DNA]</scope>
    <source>
        <strain>ATCC 204508 / S288c</strain>
    </source>
</reference>
<reference key="2">
    <citation type="journal article" date="2014" name="G3 (Bethesda)">
        <title>The reference genome sequence of Saccharomyces cerevisiae: Then and now.</title>
        <authorList>
            <person name="Engel S.R."/>
            <person name="Dietrich F.S."/>
            <person name="Fisk D.G."/>
            <person name="Binkley G."/>
            <person name="Balakrishnan R."/>
            <person name="Costanzo M.C."/>
            <person name="Dwight S.S."/>
            <person name="Hitz B.C."/>
            <person name="Karra K."/>
            <person name="Nash R.S."/>
            <person name="Weng S."/>
            <person name="Wong E.D."/>
            <person name="Lloyd P."/>
            <person name="Skrzypek M.S."/>
            <person name="Miyasato S.R."/>
            <person name="Simison M."/>
            <person name="Cherry J.M."/>
        </authorList>
    </citation>
    <scope>GENOME REANNOTATION</scope>
    <source>
        <strain>ATCC 204508 / S288c</strain>
    </source>
</reference>
<evidence type="ECO:0000255" key="1"/>
<evidence type="ECO:0000305" key="2"/>
<evidence type="ECO:0000305" key="3">
    <source>
    </source>
</evidence>
<proteinExistence type="uncertain"/>
<comment type="subcellular location">
    <subcellularLocation>
        <location evidence="2">Membrane</location>
        <topology evidence="2">Single-pass membrane protein</topology>
    </subcellularLocation>
</comment>
<comment type="caution">
    <text evidence="3">Product of a dubious gene prediction unlikely to encode a functional protein. Because of that it is not part of the S.cerevisiae S288c complete/reference proteome set.</text>
</comment>
<accession>P53880</accession>
<organism>
    <name type="scientific">Saccharomyces cerevisiae (strain ATCC 204508 / S288c)</name>
    <name type="common">Baker's yeast</name>
    <dbReference type="NCBI Taxonomy" id="559292"/>
    <lineage>
        <taxon>Eukaryota</taxon>
        <taxon>Fungi</taxon>
        <taxon>Dikarya</taxon>
        <taxon>Ascomycota</taxon>
        <taxon>Saccharomycotina</taxon>
        <taxon>Saccharomycetes</taxon>
        <taxon>Saccharomycetales</taxon>
        <taxon>Saccharomycetaceae</taxon>
        <taxon>Saccharomyces</taxon>
    </lineage>
</organism>